<keyword id="KW-1185">Reference proteome</keyword>
<reference key="1">
    <citation type="journal article" date="2004" name="Science">
        <title>The 1.2-megabase genome sequence of Mimivirus.</title>
        <authorList>
            <person name="Raoult D."/>
            <person name="Audic S."/>
            <person name="Robert C."/>
            <person name="Abergel C."/>
            <person name="Renesto P."/>
            <person name="Ogata H."/>
            <person name="La Scola B."/>
            <person name="Susan M."/>
            <person name="Claverie J.-M."/>
        </authorList>
    </citation>
    <scope>NUCLEOTIDE SEQUENCE [LARGE SCALE GENOMIC DNA]</scope>
    <source>
        <strain>Rowbotham-Bradford</strain>
    </source>
</reference>
<name>YR632_MIMIV</name>
<feature type="chain" id="PRO_0000251125" description="Uncharacterized protein R632">
    <location>
        <begin position="1"/>
        <end position="321"/>
    </location>
</feature>
<dbReference type="EMBL" id="AY653733">
    <property type="protein sequence ID" value="AAV50893.1"/>
    <property type="molecule type" value="Genomic_DNA"/>
</dbReference>
<dbReference type="SMR" id="Q5UR76"/>
<dbReference type="KEGG" id="vg:9925274"/>
<dbReference type="OrthoDB" id="12254at10239"/>
<dbReference type="Proteomes" id="UP000001134">
    <property type="component" value="Genome"/>
</dbReference>
<dbReference type="GO" id="GO:0017064">
    <property type="term" value="F:fatty acid amide hydrolase activity"/>
    <property type="evidence" value="ECO:0007669"/>
    <property type="project" value="InterPro"/>
</dbReference>
<dbReference type="GO" id="GO:0006631">
    <property type="term" value="P:fatty acid metabolic process"/>
    <property type="evidence" value="ECO:0007669"/>
    <property type="project" value="InterPro"/>
</dbReference>
<dbReference type="Gene3D" id="3.60.60.10">
    <property type="entry name" value="Penicillin V Acylase, Chain A"/>
    <property type="match status" value="1"/>
</dbReference>
<dbReference type="InterPro" id="IPR016699">
    <property type="entry name" value="Acid_ceramidase-like"/>
</dbReference>
<dbReference type="InterPro" id="IPR029130">
    <property type="entry name" value="Acid_ceramidase_N"/>
</dbReference>
<dbReference type="PANTHER" id="PTHR28583">
    <property type="entry name" value="ACID AMIDASE"/>
    <property type="match status" value="1"/>
</dbReference>
<dbReference type="PANTHER" id="PTHR28583:SF4">
    <property type="entry name" value="N-ACYLETHANOLAMINE-HYDROLYZING ACID AMIDASE"/>
    <property type="match status" value="1"/>
</dbReference>
<dbReference type="Pfam" id="PF15508">
    <property type="entry name" value="NAAA-beta"/>
    <property type="match status" value="1"/>
</dbReference>
<dbReference type="PIRSF" id="PIRSF017632">
    <property type="entry name" value="Acid_ceramidase-like"/>
    <property type="match status" value="1"/>
</dbReference>
<sequence>MKEIVYYDFDLDLNPEIRWVKIFDAFKDKITELKSHLVNLLKPHDSSLKVISMLSGFINPENILHYGEIKYITSKLGMKMYEIIILQLVYEITAACTSAVIDVGDNKLFLRTLDWPLEFLKDFTIGLNIIRANKKIGQTITWIGYVGFLTAWNHKHNYTIAINYRNSNESNQSRLAKIIKNIQRTITLKWPVGYMVRYLIENEKPIEKVIAFTTEVQLISPCYITVYISDGQSFVVTRDCHKTVDIRTDNLIQTNCDFGKNKPNILYSVERRDYVESVIASITTDISPDKLIKTLLKFPVVNEDTIFWVCQFEGKTYSNIV</sequence>
<organismHost>
    <name type="scientific">Acanthamoeba polyphaga</name>
    <name type="common">Amoeba</name>
    <dbReference type="NCBI Taxonomy" id="5757"/>
</organismHost>
<organism>
    <name type="scientific">Acanthamoeba polyphaga mimivirus</name>
    <name type="common">APMV</name>
    <dbReference type="NCBI Taxonomy" id="212035"/>
    <lineage>
        <taxon>Viruses</taxon>
        <taxon>Varidnaviria</taxon>
        <taxon>Bamfordvirae</taxon>
        <taxon>Nucleocytoviricota</taxon>
        <taxon>Megaviricetes</taxon>
        <taxon>Imitervirales</taxon>
        <taxon>Mimiviridae</taxon>
        <taxon>Megamimivirinae</taxon>
        <taxon>Mimivirus</taxon>
        <taxon>Mimivirus bradfordmassiliense</taxon>
    </lineage>
</organism>
<accession>Q5UR76</accession>
<proteinExistence type="predicted"/>
<protein>
    <recommendedName>
        <fullName>Uncharacterized protein R632</fullName>
    </recommendedName>
</protein>
<gene>
    <name type="ordered locus">MIMI_R632</name>
</gene>